<protein>
    <recommendedName>
        <fullName evidence="1">Translational regulator CsrA</fullName>
    </recommendedName>
    <alternativeName>
        <fullName evidence="1">Carbon storage regulator</fullName>
    </alternativeName>
</protein>
<feature type="chain" id="PRO_1000023386" description="Translational regulator CsrA">
    <location>
        <begin position="1"/>
        <end position="63"/>
    </location>
</feature>
<keyword id="KW-0010">Activator</keyword>
<keyword id="KW-0963">Cytoplasm</keyword>
<keyword id="KW-0678">Repressor</keyword>
<keyword id="KW-0694">RNA-binding</keyword>
<keyword id="KW-0810">Translation regulation</keyword>
<name>CSRA_HAEI8</name>
<reference key="1">
    <citation type="journal article" date="2005" name="J. Bacteriol.">
        <title>Genomic sequence of an otitis media isolate of nontypeable Haemophilus influenzae: comparative study with H. influenzae serotype d, strain KW20.</title>
        <authorList>
            <person name="Harrison A."/>
            <person name="Dyer D.W."/>
            <person name="Gillaspy A."/>
            <person name="Ray W.C."/>
            <person name="Mungur R."/>
            <person name="Carson M.B."/>
            <person name="Zhong H."/>
            <person name="Gipson J."/>
            <person name="Gipson M."/>
            <person name="Johnson L.S."/>
            <person name="Lewis L."/>
            <person name="Bakaletz L.O."/>
            <person name="Munson R.S. Jr."/>
        </authorList>
    </citation>
    <scope>NUCLEOTIDE SEQUENCE [LARGE SCALE GENOMIC DNA]</scope>
    <source>
        <strain>86-028NP</strain>
    </source>
</reference>
<dbReference type="EMBL" id="CP000057">
    <property type="protein sequence ID" value="AAX87860.1"/>
    <property type="molecule type" value="Genomic_DNA"/>
</dbReference>
<dbReference type="RefSeq" id="WP_005632782.1">
    <property type="nucleotide sequence ID" value="NC_007146.2"/>
</dbReference>
<dbReference type="SMR" id="Q4QM87"/>
<dbReference type="GeneID" id="93219854"/>
<dbReference type="KEGG" id="hit:NTHI0977"/>
<dbReference type="HOGENOM" id="CLU_164837_2_1_6"/>
<dbReference type="Proteomes" id="UP000002525">
    <property type="component" value="Chromosome"/>
</dbReference>
<dbReference type="GO" id="GO:0005829">
    <property type="term" value="C:cytosol"/>
    <property type="evidence" value="ECO:0007669"/>
    <property type="project" value="TreeGrafter"/>
</dbReference>
<dbReference type="GO" id="GO:0048027">
    <property type="term" value="F:mRNA 5'-UTR binding"/>
    <property type="evidence" value="ECO:0007669"/>
    <property type="project" value="UniProtKB-UniRule"/>
</dbReference>
<dbReference type="GO" id="GO:0006402">
    <property type="term" value="P:mRNA catabolic process"/>
    <property type="evidence" value="ECO:0007669"/>
    <property type="project" value="InterPro"/>
</dbReference>
<dbReference type="GO" id="GO:0045947">
    <property type="term" value="P:negative regulation of translational initiation"/>
    <property type="evidence" value="ECO:0007669"/>
    <property type="project" value="UniProtKB-UniRule"/>
</dbReference>
<dbReference type="GO" id="GO:0045948">
    <property type="term" value="P:positive regulation of translational initiation"/>
    <property type="evidence" value="ECO:0007669"/>
    <property type="project" value="UniProtKB-UniRule"/>
</dbReference>
<dbReference type="GO" id="GO:0006109">
    <property type="term" value="P:regulation of carbohydrate metabolic process"/>
    <property type="evidence" value="ECO:0007669"/>
    <property type="project" value="UniProtKB-UniRule"/>
</dbReference>
<dbReference type="FunFam" id="2.60.40.4380:FF:000001">
    <property type="entry name" value="Translational regulator CsrA"/>
    <property type="match status" value="1"/>
</dbReference>
<dbReference type="Gene3D" id="2.60.40.4380">
    <property type="entry name" value="Translational regulator CsrA"/>
    <property type="match status" value="1"/>
</dbReference>
<dbReference type="HAMAP" id="MF_00167">
    <property type="entry name" value="CsrA"/>
    <property type="match status" value="1"/>
</dbReference>
<dbReference type="InterPro" id="IPR003751">
    <property type="entry name" value="CsrA"/>
</dbReference>
<dbReference type="InterPro" id="IPR036107">
    <property type="entry name" value="CsrA_sf"/>
</dbReference>
<dbReference type="NCBIfam" id="TIGR00202">
    <property type="entry name" value="csrA"/>
    <property type="match status" value="1"/>
</dbReference>
<dbReference type="NCBIfam" id="NF002469">
    <property type="entry name" value="PRK01712.1"/>
    <property type="match status" value="1"/>
</dbReference>
<dbReference type="PANTHER" id="PTHR34984">
    <property type="entry name" value="CARBON STORAGE REGULATOR"/>
    <property type="match status" value="1"/>
</dbReference>
<dbReference type="PANTHER" id="PTHR34984:SF1">
    <property type="entry name" value="CARBON STORAGE REGULATOR"/>
    <property type="match status" value="1"/>
</dbReference>
<dbReference type="Pfam" id="PF02599">
    <property type="entry name" value="CsrA"/>
    <property type="match status" value="1"/>
</dbReference>
<dbReference type="SUPFAM" id="SSF117130">
    <property type="entry name" value="CsrA-like"/>
    <property type="match status" value="1"/>
</dbReference>
<sequence length="63" mass="7024">MLILTRKVGESVLIGDDISITVLSVRGNQVKLGVEAPKEVSVHREEIYQRIKQTKDEPYLGSS</sequence>
<gene>
    <name evidence="1" type="primary">csrA</name>
    <name type="ordered locus">NTHI0977</name>
</gene>
<evidence type="ECO:0000255" key="1">
    <source>
        <dbReference type="HAMAP-Rule" id="MF_00167"/>
    </source>
</evidence>
<accession>Q4QM87</accession>
<comment type="function">
    <text evidence="1">A key translational regulator that binds mRNA to regulate translation initiation and/or mRNA stability. Mediates global changes in gene expression, shifting from rapid growth to stress survival by linking envelope stress, the stringent response and the catabolite repression systems. Usually binds in the 5'-UTR; binding at or near the Shine-Dalgarno sequence prevents ribosome-binding, repressing translation, binding elsewhere in the 5'-UTR can activate translation and/or stabilize the mRNA. Its function is antagonized by small RNA(s).</text>
</comment>
<comment type="subunit">
    <text evidence="1">Homodimer; the beta-strands of each monomer intercalate to form a hydrophobic core, while the alpha-helices form wings that extend away from the core.</text>
</comment>
<comment type="subcellular location">
    <subcellularLocation>
        <location evidence="1">Cytoplasm</location>
    </subcellularLocation>
</comment>
<comment type="similarity">
    <text evidence="1">Belongs to the CsrA/RsmA family.</text>
</comment>
<organism>
    <name type="scientific">Haemophilus influenzae (strain 86-028NP)</name>
    <dbReference type="NCBI Taxonomy" id="281310"/>
    <lineage>
        <taxon>Bacteria</taxon>
        <taxon>Pseudomonadati</taxon>
        <taxon>Pseudomonadota</taxon>
        <taxon>Gammaproteobacteria</taxon>
        <taxon>Pasteurellales</taxon>
        <taxon>Pasteurellaceae</taxon>
        <taxon>Haemophilus</taxon>
    </lineage>
</organism>
<proteinExistence type="inferred from homology"/>